<accession>A9AJ19</accession>
<feature type="chain" id="PRO_1000090602" description="Phospho-N-acetylmuramoyl-pentapeptide-transferase">
    <location>
        <begin position="1"/>
        <end position="389"/>
    </location>
</feature>
<feature type="transmembrane region" description="Helical" evidence="1">
    <location>
        <begin position="25"/>
        <end position="45"/>
    </location>
</feature>
<feature type="transmembrane region" description="Helical" evidence="1">
    <location>
        <begin position="73"/>
        <end position="93"/>
    </location>
</feature>
<feature type="transmembrane region" description="Helical" evidence="1">
    <location>
        <begin position="97"/>
        <end position="117"/>
    </location>
</feature>
<feature type="transmembrane region" description="Helical" evidence="1">
    <location>
        <begin position="135"/>
        <end position="155"/>
    </location>
</feature>
<feature type="transmembrane region" description="Helical" evidence="1">
    <location>
        <begin position="190"/>
        <end position="210"/>
    </location>
</feature>
<feature type="transmembrane region" description="Helical" evidence="1">
    <location>
        <begin position="222"/>
        <end position="242"/>
    </location>
</feature>
<feature type="transmembrane region" description="Helical" evidence="1">
    <location>
        <begin position="258"/>
        <end position="278"/>
    </location>
</feature>
<feature type="transmembrane region" description="Helical" evidence="1">
    <location>
        <begin position="286"/>
        <end position="306"/>
    </location>
</feature>
<feature type="transmembrane region" description="Helical" evidence="1">
    <location>
        <begin position="311"/>
        <end position="331"/>
    </location>
</feature>
<feature type="transmembrane region" description="Helical" evidence="1">
    <location>
        <begin position="366"/>
        <end position="386"/>
    </location>
</feature>
<gene>
    <name evidence="1" type="primary">mraY</name>
    <name type="ordered locus">Bmul_2839</name>
    <name type="ordered locus">BMULJ_00399</name>
</gene>
<comment type="function">
    <text evidence="1">Catalyzes the initial step of the lipid cycle reactions in the biosynthesis of the cell wall peptidoglycan: transfers peptidoglycan precursor phospho-MurNAc-pentapeptide from UDP-MurNAc-pentapeptide onto the lipid carrier undecaprenyl phosphate, yielding undecaprenyl-pyrophosphoryl-MurNAc-pentapeptide, known as lipid I.</text>
</comment>
<comment type="catalytic activity">
    <reaction evidence="1">
        <text>UDP-N-acetyl-alpha-D-muramoyl-L-alanyl-gamma-D-glutamyl-meso-2,6-diaminopimeloyl-D-alanyl-D-alanine + di-trans,octa-cis-undecaprenyl phosphate = di-trans,octa-cis-undecaprenyl diphospho-N-acetyl-alpha-D-muramoyl-L-alanyl-D-glutamyl-meso-2,6-diaminopimeloyl-D-alanyl-D-alanine + UMP</text>
        <dbReference type="Rhea" id="RHEA:28386"/>
        <dbReference type="ChEBI" id="CHEBI:57865"/>
        <dbReference type="ChEBI" id="CHEBI:60392"/>
        <dbReference type="ChEBI" id="CHEBI:61386"/>
        <dbReference type="ChEBI" id="CHEBI:61387"/>
        <dbReference type="EC" id="2.7.8.13"/>
    </reaction>
</comment>
<comment type="cofactor">
    <cofactor evidence="1">
        <name>Mg(2+)</name>
        <dbReference type="ChEBI" id="CHEBI:18420"/>
    </cofactor>
</comment>
<comment type="pathway">
    <text evidence="1">Cell wall biogenesis; peptidoglycan biosynthesis.</text>
</comment>
<comment type="subcellular location">
    <subcellularLocation>
        <location evidence="1">Cell inner membrane</location>
        <topology evidence="1">Multi-pass membrane protein</topology>
    </subcellularLocation>
</comment>
<comment type="similarity">
    <text evidence="1">Belongs to the glycosyltransferase 4 family. MraY subfamily.</text>
</comment>
<proteinExistence type="inferred from homology"/>
<keyword id="KW-0131">Cell cycle</keyword>
<keyword id="KW-0132">Cell division</keyword>
<keyword id="KW-0997">Cell inner membrane</keyword>
<keyword id="KW-1003">Cell membrane</keyword>
<keyword id="KW-0133">Cell shape</keyword>
<keyword id="KW-0961">Cell wall biogenesis/degradation</keyword>
<keyword id="KW-0460">Magnesium</keyword>
<keyword id="KW-0472">Membrane</keyword>
<keyword id="KW-0479">Metal-binding</keyword>
<keyword id="KW-0573">Peptidoglycan synthesis</keyword>
<keyword id="KW-1185">Reference proteome</keyword>
<keyword id="KW-0808">Transferase</keyword>
<keyword id="KW-0812">Transmembrane</keyword>
<keyword id="KW-1133">Transmembrane helix</keyword>
<protein>
    <recommendedName>
        <fullName evidence="1">Phospho-N-acetylmuramoyl-pentapeptide-transferase</fullName>
        <ecNumber evidence="1">2.7.8.13</ecNumber>
    </recommendedName>
    <alternativeName>
        <fullName evidence="1">UDP-MurNAc-pentapeptide phosphotransferase</fullName>
    </alternativeName>
</protein>
<sequence>MLLALAQWLQGDASFLRLFTYLTFRAVMATITALGIGLVCGPWVIRKLTEMKVGQAVRKDGPQTHLVKSGTPTMGGVLILIGIAVATLLWGDLTNRFIWIVMLVTFGFGVIGWVDDYRKVVYKDPRGMSSREKYFWQSVIGLFAAVYLAFSVSEANNVRVFDLFMAWVRSGLSMGLPARADLMLPFLKSISYPLGVWGFIALTYFVIVGASNAVNLTDGLDGLVIMPVVLVGASLGVFAYVMGSAVYSKYLLFPHIPGAGELLIFCSAMGGAGLAFLWYNTHPAQVFMGDVGALALGGALGTVAVIVRQEIVLFIMGGIFVAETLSVMLQVTWFKYTKKRYGEGRRIFKMAPLHHHFELSGWKETQVVVRFWIITLMLCLFGLSTLKLR</sequence>
<evidence type="ECO:0000255" key="1">
    <source>
        <dbReference type="HAMAP-Rule" id="MF_00038"/>
    </source>
</evidence>
<reference key="1">
    <citation type="submission" date="2007-10" db="EMBL/GenBank/DDBJ databases">
        <title>Complete sequence of chromosome 1 of Burkholderia multivorans ATCC 17616.</title>
        <authorList>
            <person name="Copeland A."/>
            <person name="Lucas S."/>
            <person name="Lapidus A."/>
            <person name="Barry K."/>
            <person name="Glavina del Rio T."/>
            <person name="Dalin E."/>
            <person name="Tice H."/>
            <person name="Pitluck S."/>
            <person name="Chain P."/>
            <person name="Malfatti S."/>
            <person name="Shin M."/>
            <person name="Vergez L."/>
            <person name="Schmutz J."/>
            <person name="Larimer F."/>
            <person name="Land M."/>
            <person name="Hauser L."/>
            <person name="Kyrpides N."/>
            <person name="Kim E."/>
            <person name="Tiedje J."/>
            <person name="Richardson P."/>
        </authorList>
    </citation>
    <scope>NUCLEOTIDE SEQUENCE [LARGE SCALE GENOMIC DNA]</scope>
    <source>
        <strain>ATCC 17616 / 249</strain>
    </source>
</reference>
<reference key="2">
    <citation type="submission" date="2007-04" db="EMBL/GenBank/DDBJ databases">
        <title>Complete genome sequence of Burkholderia multivorans ATCC 17616.</title>
        <authorList>
            <person name="Ohtsubo Y."/>
            <person name="Yamashita A."/>
            <person name="Kurokawa K."/>
            <person name="Takami H."/>
            <person name="Yuhara S."/>
            <person name="Nishiyama E."/>
            <person name="Endo R."/>
            <person name="Miyazaki R."/>
            <person name="Ono A."/>
            <person name="Yano K."/>
            <person name="Ito M."/>
            <person name="Sota M."/>
            <person name="Yuji N."/>
            <person name="Hattori M."/>
            <person name="Tsuda M."/>
        </authorList>
    </citation>
    <scope>NUCLEOTIDE SEQUENCE [LARGE SCALE GENOMIC DNA]</scope>
    <source>
        <strain>ATCC 17616 / 249</strain>
    </source>
</reference>
<dbReference type="EC" id="2.7.8.13" evidence="1"/>
<dbReference type="EMBL" id="CP000868">
    <property type="protein sequence ID" value="ABX16523.1"/>
    <property type="molecule type" value="Genomic_DNA"/>
</dbReference>
<dbReference type="EMBL" id="AP009385">
    <property type="protein sequence ID" value="BAG42367.1"/>
    <property type="molecule type" value="Genomic_DNA"/>
</dbReference>
<dbReference type="RefSeq" id="WP_006400444.1">
    <property type="nucleotide sequence ID" value="NC_010804.1"/>
</dbReference>
<dbReference type="SMR" id="A9AJ19"/>
<dbReference type="STRING" id="395019.BMULJ_00399"/>
<dbReference type="GeneID" id="89568839"/>
<dbReference type="KEGG" id="bmj:BMULJ_00399"/>
<dbReference type="KEGG" id="bmu:Bmul_2839"/>
<dbReference type="eggNOG" id="COG0472">
    <property type="taxonomic scope" value="Bacteria"/>
</dbReference>
<dbReference type="HOGENOM" id="CLU_023982_0_0_4"/>
<dbReference type="UniPathway" id="UPA00219"/>
<dbReference type="Proteomes" id="UP000008815">
    <property type="component" value="Chromosome 1"/>
</dbReference>
<dbReference type="GO" id="GO:0005886">
    <property type="term" value="C:plasma membrane"/>
    <property type="evidence" value="ECO:0007669"/>
    <property type="project" value="UniProtKB-SubCell"/>
</dbReference>
<dbReference type="GO" id="GO:0046872">
    <property type="term" value="F:metal ion binding"/>
    <property type="evidence" value="ECO:0007669"/>
    <property type="project" value="UniProtKB-KW"/>
</dbReference>
<dbReference type="GO" id="GO:0008963">
    <property type="term" value="F:phospho-N-acetylmuramoyl-pentapeptide-transferase activity"/>
    <property type="evidence" value="ECO:0007669"/>
    <property type="project" value="UniProtKB-UniRule"/>
</dbReference>
<dbReference type="GO" id="GO:0051992">
    <property type="term" value="F:UDP-N-acetylmuramoyl-L-alanyl-D-glutamyl-meso-2,6-diaminopimelyl-D-alanyl-D-alanine:undecaprenyl-phosphate transferase activity"/>
    <property type="evidence" value="ECO:0007669"/>
    <property type="project" value="RHEA"/>
</dbReference>
<dbReference type="GO" id="GO:0051301">
    <property type="term" value="P:cell division"/>
    <property type="evidence" value="ECO:0007669"/>
    <property type="project" value="UniProtKB-KW"/>
</dbReference>
<dbReference type="GO" id="GO:0071555">
    <property type="term" value="P:cell wall organization"/>
    <property type="evidence" value="ECO:0007669"/>
    <property type="project" value="UniProtKB-KW"/>
</dbReference>
<dbReference type="GO" id="GO:0009252">
    <property type="term" value="P:peptidoglycan biosynthetic process"/>
    <property type="evidence" value="ECO:0007669"/>
    <property type="project" value="UniProtKB-UniRule"/>
</dbReference>
<dbReference type="GO" id="GO:0008360">
    <property type="term" value="P:regulation of cell shape"/>
    <property type="evidence" value="ECO:0007669"/>
    <property type="project" value="UniProtKB-KW"/>
</dbReference>
<dbReference type="CDD" id="cd06852">
    <property type="entry name" value="GT_MraY"/>
    <property type="match status" value="1"/>
</dbReference>
<dbReference type="HAMAP" id="MF_00038">
    <property type="entry name" value="MraY"/>
    <property type="match status" value="1"/>
</dbReference>
<dbReference type="InterPro" id="IPR000715">
    <property type="entry name" value="Glycosyl_transferase_4"/>
</dbReference>
<dbReference type="InterPro" id="IPR003524">
    <property type="entry name" value="PNAcMuramoyl-5peptid_Trfase"/>
</dbReference>
<dbReference type="InterPro" id="IPR018480">
    <property type="entry name" value="PNAcMuramoyl-5peptid_Trfase_CS"/>
</dbReference>
<dbReference type="NCBIfam" id="TIGR00445">
    <property type="entry name" value="mraY"/>
    <property type="match status" value="1"/>
</dbReference>
<dbReference type="PANTHER" id="PTHR22926">
    <property type="entry name" value="PHOSPHO-N-ACETYLMURAMOYL-PENTAPEPTIDE-TRANSFERASE"/>
    <property type="match status" value="1"/>
</dbReference>
<dbReference type="PANTHER" id="PTHR22926:SF5">
    <property type="entry name" value="PHOSPHO-N-ACETYLMURAMOYL-PENTAPEPTIDE-TRANSFERASE HOMOLOG"/>
    <property type="match status" value="1"/>
</dbReference>
<dbReference type="Pfam" id="PF00953">
    <property type="entry name" value="Glycos_transf_4"/>
    <property type="match status" value="1"/>
</dbReference>
<dbReference type="Pfam" id="PF10555">
    <property type="entry name" value="MraY_sig1"/>
    <property type="match status" value="1"/>
</dbReference>
<dbReference type="PROSITE" id="PS01347">
    <property type="entry name" value="MRAY_1"/>
    <property type="match status" value="1"/>
</dbReference>
<dbReference type="PROSITE" id="PS01348">
    <property type="entry name" value="MRAY_2"/>
    <property type="match status" value="1"/>
</dbReference>
<name>MRAY_BURM1</name>
<organism>
    <name type="scientific">Burkholderia multivorans (strain ATCC 17616 / 249)</name>
    <dbReference type="NCBI Taxonomy" id="395019"/>
    <lineage>
        <taxon>Bacteria</taxon>
        <taxon>Pseudomonadati</taxon>
        <taxon>Pseudomonadota</taxon>
        <taxon>Betaproteobacteria</taxon>
        <taxon>Burkholderiales</taxon>
        <taxon>Burkholderiaceae</taxon>
        <taxon>Burkholderia</taxon>
        <taxon>Burkholderia cepacia complex</taxon>
    </lineage>
</organism>